<sequence>MHRTSNGSHATGGNLPDVASHYPVAYEQTLDGTVGFVIDEMTPERATASVEVTDTLRQRWGLVHGGAYCALAEMLATEATVAVVHEKGMMAVGQSNHTSFFRPVKEGHVRAEAVRIHAGSTTWFWDVSLRDDAGRLCAVSSMSIAVRPRRD</sequence>
<name>4HBT_ARTGO</name>
<keyword id="KW-0378">Hydrolase</keyword>
<keyword id="KW-0614">Plasmid</keyword>
<comment type="catalytic activity">
    <reaction evidence="2">
        <text>4-hydroxybenzoyl-CoA + H2O = 4-hydroxybenzoate + CoA + H(+)</text>
        <dbReference type="Rhea" id="RHEA:11948"/>
        <dbReference type="ChEBI" id="CHEBI:15377"/>
        <dbReference type="ChEBI" id="CHEBI:15378"/>
        <dbReference type="ChEBI" id="CHEBI:17879"/>
        <dbReference type="ChEBI" id="CHEBI:57287"/>
        <dbReference type="ChEBI" id="CHEBI:57356"/>
        <dbReference type="EC" id="3.1.2.23"/>
    </reaction>
</comment>
<comment type="pathway">
    <text>Xenobiotic degradation; 4-chlorobenzoate degradation; 4-hydroxybenzoate from 4-chlorobenzoate: step 3/3.</text>
</comment>
<comment type="subunit">
    <text evidence="2">Homotetramer.</text>
</comment>
<comment type="similarity">
    <text evidence="3">Belongs to the thioesterase PaaI family.</text>
</comment>
<protein>
    <recommendedName>
        <fullName evidence="2">4-hydroxybenzoyl-CoA thioesterase</fullName>
        <shortName evidence="2">4-HBA-CoA thioesterase</shortName>
        <ecNumber>3.1.2.23</ecNumber>
    </recommendedName>
</protein>
<gene>
    <name evidence="4" type="primary">fcbC</name>
</gene>
<feature type="chain" id="PRO_0000400828" description="4-hydroxybenzoyl-CoA thioesterase">
    <location>
        <begin position="1"/>
        <end position="151"/>
    </location>
</feature>
<feature type="active site" evidence="2">
    <location>
        <position position="73"/>
    </location>
</feature>
<feature type="binding site" evidence="1">
    <location>
        <begin position="100"/>
        <end position="102"/>
    </location>
    <ligand>
        <name>substrate</name>
    </ligand>
</feature>
<proteinExistence type="inferred from homology"/>
<geneLocation type="plasmid" evidence="4">
    <name>pCA311</name>
</geneLocation>
<evidence type="ECO:0000250" key="1"/>
<evidence type="ECO:0000250" key="2">
    <source>
        <dbReference type="UniProtKB" id="Q04416"/>
    </source>
</evidence>
<evidence type="ECO:0000305" key="3"/>
<evidence type="ECO:0000312" key="4">
    <source>
        <dbReference type="EMBL" id="AAG42237.1"/>
    </source>
</evidence>
<reference evidence="3 4" key="1">
    <citation type="submission" date="2000-09" db="EMBL/GenBank/DDBJ databases">
        <title>Sequence analysis, expression, and regulation of the 4-chlorobenzoate degradation (fcb) operon from Arthrobacter globiformis strain KZT1.</title>
        <authorList>
            <person name="Rodrigues J.L.M."/>
            <person name="Rech S."/>
            <person name="Tsoi T.V."/>
            <person name="Kachel C.A."/>
            <person name="Cole J.R."/>
            <person name="Tiedje J.M."/>
        </authorList>
    </citation>
    <scope>NUCLEOTIDE SEQUENCE [GENOMIC DNA]</scope>
    <source>
        <strain evidence="4">KZT1</strain>
    </source>
</reference>
<accession>Q7BI34</accession>
<dbReference type="EC" id="3.1.2.23"/>
<dbReference type="EMBL" id="AF304300">
    <property type="protein sequence ID" value="AAG42237.1"/>
    <property type="molecule type" value="Genomic_DNA"/>
</dbReference>
<dbReference type="SMR" id="Q7BI34"/>
<dbReference type="UniPathway" id="UPA01011">
    <property type="reaction ID" value="UER01022"/>
</dbReference>
<dbReference type="GO" id="GO:0005829">
    <property type="term" value="C:cytosol"/>
    <property type="evidence" value="ECO:0007669"/>
    <property type="project" value="TreeGrafter"/>
</dbReference>
<dbReference type="GO" id="GO:0061522">
    <property type="term" value="F:1,4-dihydroxy-2-naphthoyl-CoA thioesterase activity"/>
    <property type="evidence" value="ECO:0007669"/>
    <property type="project" value="TreeGrafter"/>
</dbReference>
<dbReference type="GO" id="GO:0018739">
    <property type="term" value="F:4-hydroxybenzoyl-CoA thioesterase activity"/>
    <property type="evidence" value="ECO:0007669"/>
    <property type="project" value="UniProtKB-EC"/>
</dbReference>
<dbReference type="CDD" id="cd03443">
    <property type="entry name" value="PaaI_thioesterase"/>
    <property type="match status" value="1"/>
</dbReference>
<dbReference type="Gene3D" id="3.10.129.10">
    <property type="entry name" value="Hotdog Thioesterase"/>
    <property type="match status" value="1"/>
</dbReference>
<dbReference type="InterPro" id="IPR029069">
    <property type="entry name" value="HotDog_dom_sf"/>
</dbReference>
<dbReference type="InterPro" id="IPR003736">
    <property type="entry name" value="PAAI_dom"/>
</dbReference>
<dbReference type="InterPro" id="IPR006683">
    <property type="entry name" value="Thioestr_dom"/>
</dbReference>
<dbReference type="NCBIfam" id="TIGR00369">
    <property type="entry name" value="unchar_dom_1"/>
    <property type="match status" value="1"/>
</dbReference>
<dbReference type="PANTHER" id="PTHR43240">
    <property type="entry name" value="1,4-DIHYDROXY-2-NAPHTHOYL-COA THIOESTERASE 1"/>
    <property type="match status" value="1"/>
</dbReference>
<dbReference type="PANTHER" id="PTHR43240:SF5">
    <property type="entry name" value="1,4-DIHYDROXY-2-NAPHTHOYL-COA THIOESTERASE 1"/>
    <property type="match status" value="1"/>
</dbReference>
<dbReference type="Pfam" id="PF03061">
    <property type="entry name" value="4HBT"/>
    <property type="match status" value="1"/>
</dbReference>
<dbReference type="SUPFAM" id="SSF54637">
    <property type="entry name" value="Thioesterase/thiol ester dehydrase-isomerase"/>
    <property type="match status" value="1"/>
</dbReference>
<organism>
    <name type="scientific">Arthrobacter globiformis</name>
    <dbReference type="NCBI Taxonomy" id="1665"/>
    <lineage>
        <taxon>Bacteria</taxon>
        <taxon>Bacillati</taxon>
        <taxon>Actinomycetota</taxon>
        <taxon>Actinomycetes</taxon>
        <taxon>Micrococcales</taxon>
        <taxon>Micrococcaceae</taxon>
        <taxon>Arthrobacter</taxon>
    </lineage>
</organism>